<keyword id="KW-0961">Cell wall biogenesis/degradation</keyword>
<keyword id="KW-0256">Endoplasmic reticulum</keyword>
<keyword id="KW-0325">Glycoprotein</keyword>
<keyword id="KW-0472">Membrane</keyword>
<keyword id="KW-1185">Reference proteome</keyword>
<keyword id="KW-0732">Signal</keyword>
<keyword id="KW-0812">Transmembrane</keyword>
<keyword id="KW-1133">Transmembrane helix</keyword>
<proteinExistence type="inferred from homology"/>
<accession>Q6FKH5</accession>
<gene>
    <name type="primary">BIG1</name>
    <name type="ordered locus">CAGL0L11528g</name>
</gene>
<reference key="1">
    <citation type="journal article" date="2004" name="Nature">
        <title>Genome evolution in yeasts.</title>
        <authorList>
            <person name="Dujon B."/>
            <person name="Sherman D."/>
            <person name="Fischer G."/>
            <person name="Durrens P."/>
            <person name="Casaregola S."/>
            <person name="Lafontaine I."/>
            <person name="de Montigny J."/>
            <person name="Marck C."/>
            <person name="Neuveglise C."/>
            <person name="Talla E."/>
            <person name="Goffard N."/>
            <person name="Frangeul L."/>
            <person name="Aigle M."/>
            <person name="Anthouard V."/>
            <person name="Babour A."/>
            <person name="Barbe V."/>
            <person name="Barnay S."/>
            <person name="Blanchin S."/>
            <person name="Beckerich J.-M."/>
            <person name="Beyne E."/>
            <person name="Bleykasten C."/>
            <person name="Boisrame A."/>
            <person name="Boyer J."/>
            <person name="Cattolico L."/>
            <person name="Confanioleri F."/>
            <person name="de Daruvar A."/>
            <person name="Despons L."/>
            <person name="Fabre E."/>
            <person name="Fairhead C."/>
            <person name="Ferry-Dumazet H."/>
            <person name="Groppi A."/>
            <person name="Hantraye F."/>
            <person name="Hennequin C."/>
            <person name="Jauniaux N."/>
            <person name="Joyet P."/>
            <person name="Kachouri R."/>
            <person name="Kerrest A."/>
            <person name="Koszul R."/>
            <person name="Lemaire M."/>
            <person name="Lesur I."/>
            <person name="Ma L."/>
            <person name="Muller H."/>
            <person name="Nicaud J.-M."/>
            <person name="Nikolski M."/>
            <person name="Oztas S."/>
            <person name="Ozier-Kalogeropoulos O."/>
            <person name="Pellenz S."/>
            <person name="Potier S."/>
            <person name="Richard G.-F."/>
            <person name="Straub M.-L."/>
            <person name="Suleau A."/>
            <person name="Swennen D."/>
            <person name="Tekaia F."/>
            <person name="Wesolowski-Louvel M."/>
            <person name="Westhof E."/>
            <person name="Wirth B."/>
            <person name="Zeniou-Meyer M."/>
            <person name="Zivanovic Y."/>
            <person name="Bolotin-Fukuhara M."/>
            <person name="Thierry A."/>
            <person name="Bouchier C."/>
            <person name="Caudron B."/>
            <person name="Scarpelli C."/>
            <person name="Gaillardin C."/>
            <person name="Weissenbach J."/>
            <person name="Wincker P."/>
            <person name="Souciet J.-L."/>
        </authorList>
    </citation>
    <scope>NUCLEOTIDE SEQUENCE [LARGE SCALE GENOMIC DNA]</scope>
    <source>
        <strain>ATCC 2001 / BCRC 20586 / JCM 3761 / NBRC 0622 / NRRL Y-65 / CBS 138</strain>
    </source>
</reference>
<organism>
    <name type="scientific">Candida glabrata (strain ATCC 2001 / BCRC 20586 / JCM 3761 / NBRC 0622 / NRRL Y-65 / CBS 138)</name>
    <name type="common">Yeast</name>
    <name type="synonym">Nakaseomyces glabratus</name>
    <dbReference type="NCBI Taxonomy" id="284593"/>
    <lineage>
        <taxon>Eukaryota</taxon>
        <taxon>Fungi</taxon>
        <taxon>Dikarya</taxon>
        <taxon>Ascomycota</taxon>
        <taxon>Saccharomycotina</taxon>
        <taxon>Saccharomycetes</taxon>
        <taxon>Saccharomycetales</taxon>
        <taxon>Saccharomycetaceae</taxon>
        <taxon>Nakaseomyces</taxon>
    </lineage>
</organism>
<name>BIG1_CANGA</name>
<dbReference type="EMBL" id="CR380958">
    <property type="protein sequence ID" value="CAG62243.1"/>
    <property type="molecule type" value="Genomic_DNA"/>
</dbReference>
<dbReference type="RefSeq" id="XP_449269.1">
    <property type="nucleotide sequence ID" value="XM_449269.1"/>
</dbReference>
<dbReference type="FunCoup" id="Q6FKH5">
    <property type="interactions" value="28"/>
</dbReference>
<dbReference type="STRING" id="284593.Q6FKH5"/>
<dbReference type="GlyCosmos" id="Q6FKH5">
    <property type="glycosylation" value="1 site, No reported glycans"/>
</dbReference>
<dbReference type="EnsemblFungi" id="CAGL0L11528g-T">
    <property type="protein sequence ID" value="CAGL0L11528g-T-p1"/>
    <property type="gene ID" value="CAGL0L11528g"/>
</dbReference>
<dbReference type="GeneID" id="2890969"/>
<dbReference type="KEGG" id="cgr:2890969"/>
<dbReference type="CGD" id="CAL0135806">
    <property type="gene designation" value="BIG1"/>
</dbReference>
<dbReference type="VEuPathDB" id="FungiDB:CAGL0L11528g"/>
<dbReference type="eggNOG" id="ENOG502RXHV">
    <property type="taxonomic scope" value="Eukaryota"/>
</dbReference>
<dbReference type="HOGENOM" id="CLU_067894_0_0_1"/>
<dbReference type="InParanoid" id="Q6FKH5"/>
<dbReference type="OMA" id="PNWNPIR"/>
<dbReference type="Proteomes" id="UP000002428">
    <property type="component" value="Chromosome L"/>
</dbReference>
<dbReference type="GO" id="GO:0005789">
    <property type="term" value="C:endoplasmic reticulum membrane"/>
    <property type="evidence" value="ECO:0007669"/>
    <property type="project" value="UniProtKB-SubCell"/>
</dbReference>
<dbReference type="GO" id="GO:0006078">
    <property type="term" value="P:(1-&gt;6)-beta-D-glucan biosynthetic process"/>
    <property type="evidence" value="ECO:0007669"/>
    <property type="project" value="TreeGrafter"/>
</dbReference>
<dbReference type="GO" id="GO:0071555">
    <property type="term" value="P:cell wall organization"/>
    <property type="evidence" value="ECO:0007669"/>
    <property type="project" value="UniProtKB-KW"/>
</dbReference>
<dbReference type="GO" id="GO:0009272">
    <property type="term" value="P:fungal-type cell wall biogenesis"/>
    <property type="evidence" value="ECO:0007669"/>
    <property type="project" value="TreeGrafter"/>
</dbReference>
<dbReference type="InterPro" id="IPR037654">
    <property type="entry name" value="Big1"/>
</dbReference>
<dbReference type="PANTHER" id="PTHR28285">
    <property type="entry name" value="PROTEIN BIG1"/>
    <property type="match status" value="1"/>
</dbReference>
<dbReference type="PANTHER" id="PTHR28285:SF1">
    <property type="entry name" value="PROTEIN BIG1"/>
    <property type="match status" value="1"/>
</dbReference>
<sequence length="319" mass="35559">MCGLIGIIIGLLTRVALASSLDVGTSPAILFSTRLSEGILEYYDMFDSGAVVPREDFNTVCKTLISHCNSDAVVFVNQPGLSLGDLSEYADQFQYLSSYVRHSSSAMNIERVSVSQDDQESQFESLVRYAMDTCNIYEKVVIEPYEADTYKAYIDAEKKVILIELPEFLNTQNETDRMALISSNDNRLRNILGQLPSPDISVIYTSFQPSNLAADEFAEILPAAFDVFDKNAAVERNIRLKDATRPGFINYRPKFGDFNSISQIKLDKQFLEENLGLLSAILVSTILYLFGQRLSSHSKSQNTTSNSAKNTTKKAERGN</sequence>
<evidence type="ECO:0000250" key="1"/>
<evidence type="ECO:0000255" key="2"/>
<evidence type="ECO:0000256" key="3">
    <source>
        <dbReference type="SAM" id="MobiDB-lite"/>
    </source>
</evidence>
<evidence type="ECO:0000305" key="4"/>
<protein>
    <recommendedName>
        <fullName>Protein BIG1</fullName>
    </recommendedName>
</protein>
<feature type="signal peptide" evidence="2">
    <location>
        <begin position="1"/>
        <end position="18"/>
    </location>
</feature>
<feature type="chain" id="PRO_0000277850" description="Protein BIG1">
    <location>
        <begin position="19"/>
        <end position="319"/>
    </location>
</feature>
<feature type="topological domain" description="Lumenal" evidence="2">
    <location>
        <begin position="19"/>
        <end position="269"/>
    </location>
</feature>
<feature type="transmembrane region" description="Helical" evidence="2">
    <location>
        <begin position="270"/>
        <end position="290"/>
    </location>
</feature>
<feature type="topological domain" description="Cytoplasmic" evidence="2">
    <location>
        <begin position="291"/>
        <end position="319"/>
    </location>
</feature>
<feature type="region of interest" description="Disordered" evidence="3">
    <location>
        <begin position="297"/>
        <end position="319"/>
    </location>
</feature>
<feature type="compositionally biased region" description="Low complexity" evidence="3">
    <location>
        <begin position="298"/>
        <end position="310"/>
    </location>
</feature>
<feature type="glycosylation site" description="N-linked (GlcNAc...) asparagine" evidence="2">
    <location>
        <position position="173"/>
    </location>
</feature>
<comment type="function">
    <text evidence="1">Required for normal beta-1,6-glucan synthesis.</text>
</comment>
<comment type="subcellular location">
    <subcellularLocation>
        <location evidence="1">Endoplasmic reticulum membrane</location>
        <topology evidence="1">Single-pass type I membrane protein</topology>
    </subcellularLocation>
</comment>
<comment type="similarity">
    <text evidence="4">Belongs to the BIG1 family.</text>
</comment>